<accession>Q6FRH2</accession>
<name>ATG11_CANGA</name>
<dbReference type="EMBL" id="CR380954">
    <property type="protein sequence ID" value="CAG60105.1"/>
    <property type="molecule type" value="Genomic_DNA"/>
</dbReference>
<dbReference type="RefSeq" id="XP_447172.1">
    <property type="nucleotide sequence ID" value="XM_447172.1"/>
</dbReference>
<dbReference type="SMR" id="Q6FRH2"/>
<dbReference type="FunCoup" id="Q6FRH2">
    <property type="interactions" value="181"/>
</dbReference>
<dbReference type="STRING" id="284593.Q6FRH2"/>
<dbReference type="EnsemblFungi" id="CAGL0H08558g-T">
    <property type="protein sequence ID" value="CAGL0H08558g-T-p1"/>
    <property type="gene ID" value="CAGL0H08558g"/>
</dbReference>
<dbReference type="GeneID" id="2888485"/>
<dbReference type="KEGG" id="cgr:2888485"/>
<dbReference type="CGD" id="CAL0130611">
    <property type="gene designation" value="ATG11"/>
</dbReference>
<dbReference type="VEuPathDB" id="FungiDB:CAGL0H08558g"/>
<dbReference type="eggNOG" id="ENOG502QVZE">
    <property type="taxonomic scope" value="Eukaryota"/>
</dbReference>
<dbReference type="HOGENOM" id="CLU_272501_0_0_1"/>
<dbReference type="InParanoid" id="Q6FRH2"/>
<dbReference type="OMA" id="EIDVHYF"/>
<dbReference type="Proteomes" id="UP000002428">
    <property type="component" value="Chromosome H"/>
</dbReference>
<dbReference type="GO" id="GO:1990316">
    <property type="term" value="C:Atg1/ULK1 kinase complex"/>
    <property type="evidence" value="ECO:0007669"/>
    <property type="project" value="TreeGrafter"/>
</dbReference>
<dbReference type="GO" id="GO:0034045">
    <property type="term" value="C:phagophore assembly site membrane"/>
    <property type="evidence" value="ECO:0007669"/>
    <property type="project" value="UniProtKB-SubCell"/>
</dbReference>
<dbReference type="GO" id="GO:0005774">
    <property type="term" value="C:vacuolar membrane"/>
    <property type="evidence" value="ECO:0007669"/>
    <property type="project" value="UniProtKB-SubCell"/>
</dbReference>
<dbReference type="GO" id="GO:0060090">
    <property type="term" value="F:molecular adaptor activity"/>
    <property type="evidence" value="ECO:0007669"/>
    <property type="project" value="EnsemblFungi"/>
</dbReference>
<dbReference type="GO" id="GO:0019901">
    <property type="term" value="F:protein kinase binding"/>
    <property type="evidence" value="ECO:0007669"/>
    <property type="project" value="TreeGrafter"/>
</dbReference>
<dbReference type="GO" id="GO:0000149">
    <property type="term" value="F:SNARE binding"/>
    <property type="evidence" value="ECO:0007669"/>
    <property type="project" value="EnsemblFungi"/>
</dbReference>
<dbReference type="GO" id="GO:0000422">
    <property type="term" value="P:autophagy of mitochondrion"/>
    <property type="evidence" value="ECO:0007669"/>
    <property type="project" value="EnsemblFungi"/>
</dbReference>
<dbReference type="GO" id="GO:0006995">
    <property type="term" value="P:cellular response to nitrogen starvation"/>
    <property type="evidence" value="ECO:0007669"/>
    <property type="project" value="EnsemblFungi"/>
</dbReference>
<dbReference type="GO" id="GO:0032258">
    <property type="term" value="P:cytoplasm to vacuole targeting by the Cvt pathway"/>
    <property type="evidence" value="ECO:0007669"/>
    <property type="project" value="EnsemblFungi"/>
</dbReference>
<dbReference type="GO" id="GO:0000425">
    <property type="term" value="P:pexophagy"/>
    <property type="evidence" value="ECO:0007669"/>
    <property type="project" value="EnsemblFungi"/>
</dbReference>
<dbReference type="GO" id="GO:0034727">
    <property type="term" value="P:piecemeal microautophagy of the nucleus"/>
    <property type="evidence" value="ECO:0007669"/>
    <property type="project" value="EnsemblFungi"/>
</dbReference>
<dbReference type="GO" id="GO:2000786">
    <property type="term" value="P:positive regulation of autophagosome assembly"/>
    <property type="evidence" value="ECO:0007669"/>
    <property type="project" value="EnsemblFungi"/>
</dbReference>
<dbReference type="GO" id="GO:0034497">
    <property type="term" value="P:protein localization to phagophore assembly site"/>
    <property type="evidence" value="ECO:0007669"/>
    <property type="project" value="EnsemblFungi"/>
</dbReference>
<dbReference type="GO" id="GO:0031503">
    <property type="term" value="P:protein-containing complex localization"/>
    <property type="evidence" value="ECO:0007669"/>
    <property type="project" value="EnsemblFungi"/>
</dbReference>
<dbReference type="GO" id="GO:0061709">
    <property type="term" value="P:reticulophagy"/>
    <property type="evidence" value="ECO:0007669"/>
    <property type="project" value="EnsemblFungi"/>
</dbReference>
<dbReference type="GO" id="GO:0034517">
    <property type="term" value="P:ribophagy"/>
    <property type="evidence" value="ECO:0007669"/>
    <property type="project" value="EnsemblFungi"/>
</dbReference>
<dbReference type="InterPro" id="IPR040040">
    <property type="entry name" value="ATG11"/>
</dbReference>
<dbReference type="InterPro" id="IPR019460">
    <property type="entry name" value="Atg11_C"/>
</dbReference>
<dbReference type="InterPro" id="IPR045326">
    <property type="entry name" value="ATG17-like_dom"/>
</dbReference>
<dbReference type="PANTHER" id="PTHR13222">
    <property type="entry name" value="RB1-INDUCIBLE COILED-COIL"/>
    <property type="match status" value="1"/>
</dbReference>
<dbReference type="PANTHER" id="PTHR13222:SF1">
    <property type="entry name" value="RB1-INDUCIBLE COILED-COIL PROTEIN 1"/>
    <property type="match status" value="1"/>
</dbReference>
<dbReference type="Pfam" id="PF10377">
    <property type="entry name" value="ATG11"/>
    <property type="match status" value="1"/>
</dbReference>
<dbReference type="Pfam" id="PF04108">
    <property type="entry name" value="ATG17_like"/>
    <property type="match status" value="1"/>
</dbReference>
<proteinExistence type="inferred from homology"/>
<comment type="function">
    <text evidence="1 3">Involved in cytoplasm to vacuole transport (Cvt), pexophagy, mitophagy and nucleophagy. Recruits mitochondria for their selective degradation via autophagy (mitophagy) during starvation. Works as scaffold proteins that recruit ATG proteins to the pre-autophagosome (PAS), the site of vesicle/autophagosome formation. Required for the Cvt vesicles completion (By similarity). Contributes through its regulation of pexophagy to survival during engulfment by host phagocytic cells during infection. Through its function in autophagy, acts as an important virulence factor that supports the viability of C.glabrata in the phagosomal compartment of infected innate immune cells.</text>
</comment>
<comment type="subunit">
    <text evidence="1">Homodimer.</text>
</comment>
<comment type="subcellular location">
    <subcellularLocation>
        <location evidence="1">Preautophagosomal structure membrane</location>
        <topology evidence="1">Peripheral membrane protein</topology>
    </subcellularLocation>
    <subcellularLocation>
        <location evidence="1">Vacuole membrane</location>
        <topology evidence="1">Peripheral membrane protein</topology>
    </subcellularLocation>
    <text evidence="1">During pexophagy, accumulates in the vacuolar membrane region, where the peroxisomes contact the vacuole.</text>
</comment>
<comment type="similarity">
    <text evidence="4">Belongs to the ATG11 family.</text>
</comment>
<protein>
    <recommendedName>
        <fullName>Autophagy-related protein 11</fullName>
    </recommendedName>
</protein>
<feature type="chain" id="PRO_0000124545" description="Autophagy-related protein 11">
    <location>
        <begin position="1"/>
        <end position="1110"/>
    </location>
</feature>
<feature type="coiled-coil region" evidence="2">
    <location>
        <begin position="264"/>
        <end position="309"/>
    </location>
</feature>
<feature type="coiled-coil region" evidence="2">
    <location>
        <begin position="651"/>
        <end position="803"/>
    </location>
</feature>
<evidence type="ECO:0000250" key="1"/>
<evidence type="ECO:0000255" key="2"/>
<evidence type="ECO:0000269" key="3">
    <source>
    </source>
</evidence>
<evidence type="ECO:0000305" key="4"/>
<sequence>MEYRCLDCTTGDTIAVDLKVFLDLKEFKSYLSNKWGVPRAQILLLYPFGIKLKDSNFRHASDLESPEIYVYDRRLFSLTNEPHTGADAHADSDADADADTADVEQQAAQLLDSLLEQRRHPQLQDDLIRPIPSPLEDLKIADGISHRTAVSMLTTNLGWLSALEIDVNYYSSISDKCKEDTQSLARCLGTCEQYLGLYCYDVERLYNSNVVFLDQLHENSLQSRWKECYKNTLTKLAGLNGYLSQYVDEAKQIEKEVTLKSLDGKVNSKLKQIKKELDSYADQRKSIQNEIENLKNIKDMKNDDNELHEMQKSFDSIADTVRKASRDILDKDDALFTDEYITQEVVPVMIDIQKKVKTLLTVSQALYENMHELLTHKRNFQIQIIVKLGQIAWIQLQISELKQYLLNDCNADLTLYKDLEVEFAQIEDYPLIYGLYLVEKYRRQVWKCGMAKNMISISNDIKERSAAELTTRKNWYKNFGELSKPFNEDLTKYNDLDEISKLMNSDSQFLKEKFIQDLRNEQRKLEDVIKSFIKNMHDLGLSKETTQVLEQSFKEASNSNICSQIDVTYDHRRINNENDLIKRYKIRIRKLESLLHEQGYSSISKWPSGVLNHTDRPNYFADNVSPAGRSLLVSSSALLGLEPSASLKTDAEMFDLKKEIGDLSEKVTALEKDNKLKTDQLKITHSKLIDIEVEKAAFRETLNHLNKELARLTVNEEDQTNLLKEERLRFKKEMTSVTVVNQNLMNNLDALQKTFEDVELENAHLKSKLKELQQRQDQLIEDSANEKLEIKSKYEKLIKEKDENMGQAFAVTNKAISGEQNKTESDIIHSSPYPEAILHLRTELFDIFSTNIYILENIGLLLTETSAGKFEIKRVKGLKKGLSQSLLDESAQISPIDGVINSVVYKNIRAQYEQLPNDNNISNCELFISSVKKIYENKLFESAVINRFKDIETLAKRLTKENKSKRILIDLYQNERLAVKDFRVNDLALFLPTKEALSETKSLSSSMASSFSSVDLSTPISGANNNITASRKSLHKPNVKHPWAAFTAFNESSRYFLKDENMVTDNKEWFIGKITDIQRQVVENISTNNPFKLPKDTVWYLISAEMISID</sequence>
<gene>
    <name type="primary">ATG11</name>
    <name type="ordered locus">CAGL0H08558g</name>
</gene>
<keyword id="KW-0072">Autophagy</keyword>
<keyword id="KW-0175">Coiled coil</keyword>
<keyword id="KW-0472">Membrane</keyword>
<keyword id="KW-0653">Protein transport</keyword>
<keyword id="KW-1185">Reference proteome</keyword>
<keyword id="KW-0813">Transport</keyword>
<keyword id="KW-0926">Vacuole</keyword>
<keyword id="KW-0843">Virulence</keyword>
<reference key="1">
    <citation type="journal article" date="2004" name="Nature">
        <title>Genome evolution in yeasts.</title>
        <authorList>
            <person name="Dujon B."/>
            <person name="Sherman D."/>
            <person name="Fischer G."/>
            <person name="Durrens P."/>
            <person name="Casaregola S."/>
            <person name="Lafontaine I."/>
            <person name="de Montigny J."/>
            <person name="Marck C."/>
            <person name="Neuveglise C."/>
            <person name="Talla E."/>
            <person name="Goffard N."/>
            <person name="Frangeul L."/>
            <person name="Aigle M."/>
            <person name="Anthouard V."/>
            <person name="Babour A."/>
            <person name="Barbe V."/>
            <person name="Barnay S."/>
            <person name="Blanchin S."/>
            <person name="Beckerich J.-M."/>
            <person name="Beyne E."/>
            <person name="Bleykasten C."/>
            <person name="Boisrame A."/>
            <person name="Boyer J."/>
            <person name="Cattolico L."/>
            <person name="Confanioleri F."/>
            <person name="de Daruvar A."/>
            <person name="Despons L."/>
            <person name="Fabre E."/>
            <person name="Fairhead C."/>
            <person name="Ferry-Dumazet H."/>
            <person name="Groppi A."/>
            <person name="Hantraye F."/>
            <person name="Hennequin C."/>
            <person name="Jauniaux N."/>
            <person name="Joyet P."/>
            <person name="Kachouri R."/>
            <person name="Kerrest A."/>
            <person name="Koszul R."/>
            <person name="Lemaire M."/>
            <person name="Lesur I."/>
            <person name="Ma L."/>
            <person name="Muller H."/>
            <person name="Nicaud J.-M."/>
            <person name="Nikolski M."/>
            <person name="Oztas S."/>
            <person name="Ozier-Kalogeropoulos O."/>
            <person name="Pellenz S."/>
            <person name="Potier S."/>
            <person name="Richard G.-F."/>
            <person name="Straub M.-L."/>
            <person name="Suleau A."/>
            <person name="Swennen D."/>
            <person name="Tekaia F."/>
            <person name="Wesolowski-Louvel M."/>
            <person name="Westhof E."/>
            <person name="Wirth B."/>
            <person name="Zeniou-Meyer M."/>
            <person name="Zivanovic Y."/>
            <person name="Bolotin-Fukuhara M."/>
            <person name="Thierry A."/>
            <person name="Bouchier C."/>
            <person name="Caudron B."/>
            <person name="Scarpelli C."/>
            <person name="Gaillardin C."/>
            <person name="Weissenbach J."/>
            <person name="Wincker P."/>
            <person name="Souciet J.-L."/>
        </authorList>
    </citation>
    <scope>NUCLEOTIDE SEQUENCE [LARGE SCALE GENOMIC DNA]</scope>
    <source>
        <strain>ATCC 2001 / BCRC 20586 / JCM 3761 / NBRC 0622 / NRRL Y-65 / CBS 138</strain>
    </source>
</reference>
<reference key="2">
    <citation type="journal article" date="2010" name="Cell. Microbiol.">
        <title>Autophagy supports Candida glabrata survival during phagocytosis.</title>
        <authorList>
            <person name="Roetzer A."/>
            <person name="Gratz N."/>
            <person name="Kovarik P."/>
            <person name="Schuller C."/>
        </authorList>
    </citation>
    <scope>FUNCTION</scope>
</reference>
<organism>
    <name type="scientific">Candida glabrata (strain ATCC 2001 / BCRC 20586 / JCM 3761 / NBRC 0622 / NRRL Y-65 / CBS 138)</name>
    <name type="common">Yeast</name>
    <name type="synonym">Nakaseomyces glabratus</name>
    <dbReference type="NCBI Taxonomy" id="284593"/>
    <lineage>
        <taxon>Eukaryota</taxon>
        <taxon>Fungi</taxon>
        <taxon>Dikarya</taxon>
        <taxon>Ascomycota</taxon>
        <taxon>Saccharomycotina</taxon>
        <taxon>Saccharomycetes</taxon>
        <taxon>Saccharomycetales</taxon>
        <taxon>Saccharomycetaceae</taxon>
        <taxon>Nakaseomyces</taxon>
    </lineage>
</organism>